<reference key="1">
    <citation type="journal article" date="2011" name="Genome Biol.">
        <title>Comparative and functional genomics provide insights into the pathogenicity of dermatophytic fungi.</title>
        <authorList>
            <person name="Burmester A."/>
            <person name="Shelest E."/>
            <person name="Gloeckner G."/>
            <person name="Heddergott C."/>
            <person name="Schindler S."/>
            <person name="Staib P."/>
            <person name="Heidel A."/>
            <person name="Felder M."/>
            <person name="Petzold A."/>
            <person name="Szafranski K."/>
            <person name="Feuermann M."/>
            <person name="Pedruzzi I."/>
            <person name="Priebe S."/>
            <person name="Groth M."/>
            <person name="Winkler R."/>
            <person name="Li W."/>
            <person name="Kniemeyer O."/>
            <person name="Schroeckh V."/>
            <person name="Hertweck C."/>
            <person name="Hube B."/>
            <person name="White T.C."/>
            <person name="Platzer M."/>
            <person name="Guthke R."/>
            <person name="Heitman J."/>
            <person name="Woestemeyer J."/>
            <person name="Zipfel P.F."/>
            <person name="Monod M."/>
            <person name="Brakhage A.A."/>
        </authorList>
    </citation>
    <scope>NUCLEOTIDE SEQUENCE [LARGE SCALE GENOMIC DNA]</scope>
    <source>
        <strain>ATCC MYA-4681 / CBS 112371</strain>
    </source>
</reference>
<reference key="2">
    <citation type="journal article" date="2011" name="Proteomics">
        <title>Identification of novel secreted proteases during extracellular proteolysis by dermatophytes at acidic pH.</title>
        <authorList>
            <person name="Sriranganadane D."/>
            <person name="Waridel P."/>
            <person name="Salamin K."/>
            <person name="Feuermann M."/>
            <person name="Mignon B."/>
            <person name="Staib P."/>
            <person name="Neuhaus J.M."/>
            <person name="Quadroni M."/>
            <person name="Monod M."/>
        </authorList>
    </citation>
    <scope>IDENTIFICATION BY MASS SPECTROMETRY</scope>
    <scope>SUBCELLULAR LOCATION</scope>
</reference>
<feature type="signal peptide" evidence="1">
    <location>
        <begin position="1"/>
        <end position="17"/>
    </location>
</feature>
<feature type="chain" id="PRO_5003053489" description="Uncharacterized secreted protein ARB_07637">
    <location>
        <begin position="18"/>
        <end position="195"/>
    </location>
</feature>
<feature type="glycosylation site" description="N-linked (GlcNAc...) asparagine" evidence="2">
    <location>
        <position position="75"/>
    </location>
</feature>
<gene>
    <name type="ORF">ARB_07637</name>
</gene>
<proteinExistence type="evidence at protein level"/>
<keyword id="KW-0325">Glycoprotein</keyword>
<keyword id="KW-1185">Reference proteome</keyword>
<keyword id="KW-0964">Secreted</keyword>
<keyword id="KW-0732">Signal</keyword>
<sequence length="195" mass="20549">MKASLITAFVLPLLALASPYLPTDPPANIEVTARHPGRENVDKLPMQAAGRAFWLGGSPATYCPEIVGDNCPPGNATVILGLNSMSVLVPGGQQMYVEPSGKLGFTQAHSAAIPPGSYVGGFAYKPLNKKSGSFYFGGWGATALMACPVPDSKYYQVFANIKNAMVPGGDVKKCVEFVGVAKEYKGTTPAAWQYT</sequence>
<comment type="subcellular location">
    <subcellularLocation>
        <location evidence="3">Secreted</location>
    </subcellularLocation>
</comment>
<evidence type="ECO:0000255" key="1"/>
<evidence type="ECO:0000255" key="2">
    <source>
        <dbReference type="PROSITE-ProRule" id="PRU00498"/>
    </source>
</evidence>
<evidence type="ECO:0000269" key="3">
    <source>
    </source>
</evidence>
<evidence type="ECO:0000305" key="4"/>
<accession>D4ATS1</accession>
<dbReference type="EMBL" id="ABSU01000009">
    <property type="protein sequence ID" value="EFE33690.1"/>
    <property type="molecule type" value="Genomic_DNA"/>
</dbReference>
<dbReference type="RefSeq" id="XP_003014330.1">
    <property type="nucleotide sequence ID" value="XM_003014284.1"/>
</dbReference>
<dbReference type="GeneID" id="9521750"/>
<dbReference type="KEGG" id="abe:ARB_07637"/>
<dbReference type="eggNOG" id="ENOG502S6B1">
    <property type="taxonomic scope" value="Eukaryota"/>
</dbReference>
<dbReference type="HOGENOM" id="CLU_078556_0_1_1"/>
<dbReference type="OMA" id="MYVEPSG"/>
<dbReference type="OrthoDB" id="5430620at2759"/>
<dbReference type="Proteomes" id="UP000008866">
    <property type="component" value="Unassembled WGS sequence"/>
</dbReference>
<dbReference type="GO" id="GO:0005576">
    <property type="term" value="C:extracellular region"/>
    <property type="evidence" value="ECO:0007669"/>
    <property type="project" value="UniProtKB-SubCell"/>
</dbReference>
<dbReference type="InterPro" id="IPR052820">
    <property type="entry name" value="PhiA_domain"/>
</dbReference>
<dbReference type="PANTHER" id="PTHR42047">
    <property type="entry name" value="PROTEIN, PUTATIVE (AFU_ORTHOLOGUE AFUA_6G03560)-RELATED"/>
    <property type="match status" value="1"/>
</dbReference>
<dbReference type="PANTHER" id="PTHR42047:SF1">
    <property type="entry name" value="PROTEIN, PUTATIVE (AFU_ORTHOLOGUE AFUA_6G03560)-RELATED"/>
    <property type="match status" value="1"/>
</dbReference>
<protein>
    <recommendedName>
        <fullName evidence="4">Uncharacterized secreted protein ARB_07637</fullName>
    </recommendedName>
</protein>
<name>A7637_ARTBC</name>
<organism>
    <name type="scientific">Arthroderma benhamiae (strain ATCC MYA-4681 / CBS 112371)</name>
    <name type="common">Trichophyton mentagrophytes</name>
    <dbReference type="NCBI Taxonomy" id="663331"/>
    <lineage>
        <taxon>Eukaryota</taxon>
        <taxon>Fungi</taxon>
        <taxon>Dikarya</taxon>
        <taxon>Ascomycota</taxon>
        <taxon>Pezizomycotina</taxon>
        <taxon>Eurotiomycetes</taxon>
        <taxon>Eurotiomycetidae</taxon>
        <taxon>Onygenales</taxon>
        <taxon>Arthrodermataceae</taxon>
        <taxon>Trichophyton</taxon>
    </lineage>
</organism>